<dbReference type="EC" id="4.3.2.10"/>
<dbReference type="EC" id="3.5.1.2"/>
<dbReference type="EMBL" id="X87256">
    <property type="protein sequence ID" value="CAA60713.1"/>
    <property type="molecule type" value="Genomic_DNA"/>
</dbReference>
<dbReference type="EMBL" id="CP000143">
    <property type="protein sequence ID" value="ABA78400.1"/>
    <property type="molecule type" value="Genomic_DNA"/>
</dbReference>
<dbReference type="RefSeq" id="WP_011337344.1">
    <property type="nucleotide sequence ID" value="NC_007493.2"/>
</dbReference>
<dbReference type="RefSeq" id="YP_352301.1">
    <property type="nucleotide sequence ID" value="NC_007493.2"/>
</dbReference>
<dbReference type="SMR" id="O33565"/>
<dbReference type="STRING" id="272943.RSP_2245"/>
<dbReference type="EnsemblBacteria" id="ABA78400">
    <property type="protein sequence ID" value="ABA78400"/>
    <property type="gene ID" value="RSP_2245"/>
</dbReference>
<dbReference type="GeneID" id="3719775"/>
<dbReference type="KEGG" id="rsp:RSP_2245"/>
<dbReference type="PATRIC" id="fig|272943.9.peg.1148"/>
<dbReference type="eggNOG" id="COG0118">
    <property type="taxonomic scope" value="Bacteria"/>
</dbReference>
<dbReference type="OrthoDB" id="9807137at2"/>
<dbReference type="PhylomeDB" id="O33565"/>
<dbReference type="UniPathway" id="UPA00031">
    <property type="reaction ID" value="UER00010"/>
</dbReference>
<dbReference type="Proteomes" id="UP000002703">
    <property type="component" value="Chromosome 1"/>
</dbReference>
<dbReference type="GO" id="GO:0005737">
    <property type="term" value="C:cytoplasm"/>
    <property type="evidence" value="ECO:0007669"/>
    <property type="project" value="UniProtKB-SubCell"/>
</dbReference>
<dbReference type="GO" id="GO:0004359">
    <property type="term" value="F:glutaminase activity"/>
    <property type="evidence" value="ECO:0007669"/>
    <property type="project" value="UniProtKB-EC"/>
</dbReference>
<dbReference type="GO" id="GO:0000107">
    <property type="term" value="F:imidazoleglycerol-phosphate synthase activity"/>
    <property type="evidence" value="ECO:0007669"/>
    <property type="project" value="UniProtKB-UniRule"/>
</dbReference>
<dbReference type="GO" id="GO:0016829">
    <property type="term" value="F:lyase activity"/>
    <property type="evidence" value="ECO:0007669"/>
    <property type="project" value="UniProtKB-KW"/>
</dbReference>
<dbReference type="GO" id="GO:0000105">
    <property type="term" value="P:L-histidine biosynthetic process"/>
    <property type="evidence" value="ECO:0007669"/>
    <property type="project" value="UniProtKB-UniRule"/>
</dbReference>
<dbReference type="CDD" id="cd01748">
    <property type="entry name" value="GATase1_IGP_Synthase"/>
    <property type="match status" value="1"/>
</dbReference>
<dbReference type="Gene3D" id="3.40.50.880">
    <property type="match status" value="1"/>
</dbReference>
<dbReference type="HAMAP" id="MF_00278">
    <property type="entry name" value="HisH"/>
    <property type="match status" value="1"/>
</dbReference>
<dbReference type="InterPro" id="IPR029062">
    <property type="entry name" value="Class_I_gatase-like"/>
</dbReference>
<dbReference type="InterPro" id="IPR017926">
    <property type="entry name" value="GATASE"/>
</dbReference>
<dbReference type="InterPro" id="IPR010139">
    <property type="entry name" value="Imidazole-glycPsynth_HisH"/>
</dbReference>
<dbReference type="NCBIfam" id="TIGR01855">
    <property type="entry name" value="IMP_synth_hisH"/>
    <property type="match status" value="1"/>
</dbReference>
<dbReference type="PANTHER" id="PTHR42701">
    <property type="entry name" value="IMIDAZOLE GLYCEROL PHOSPHATE SYNTHASE SUBUNIT HISH"/>
    <property type="match status" value="1"/>
</dbReference>
<dbReference type="PANTHER" id="PTHR42701:SF1">
    <property type="entry name" value="IMIDAZOLE GLYCEROL PHOSPHATE SYNTHASE SUBUNIT HISH"/>
    <property type="match status" value="1"/>
</dbReference>
<dbReference type="Pfam" id="PF00117">
    <property type="entry name" value="GATase"/>
    <property type="match status" value="1"/>
</dbReference>
<dbReference type="PIRSF" id="PIRSF000495">
    <property type="entry name" value="Amidotransf_hisH"/>
    <property type="match status" value="1"/>
</dbReference>
<dbReference type="SUPFAM" id="SSF52317">
    <property type="entry name" value="Class I glutamine amidotransferase-like"/>
    <property type="match status" value="1"/>
</dbReference>
<dbReference type="PROSITE" id="PS51273">
    <property type="entry name" value="GATASE_TYPE_1"/>
    <property type="match status" value="1"/>
</dbReference>
<protein>
    <recommendedName>
        <fullName>Imidazole glycerol phosphate synthase subunit HisH</fullName>
        <ecNumber>4.3.2.10</ecNumber>
    </recommendedName>
    <alternativeName>
        <fullName>IGP synthase glutaminase subunit</fullName>
        <ecNumber>3.5.1.2</ecNumber>
    </alternativeName>
    <alternativeName>
        <fullName>IGP synthase subunit HisH</fullName>
    </alternativeName>
    <alternativeName>
        <fullName>ImGP synthase subunit HisH</fullName>
        <shortName>IGPS subunit HisH</shortName>
    </alternativeName>
</protein>
<keyword id="KW-0028">Amino-acid biosynthesis</keyword>
<keyword id="KW-0963">Cytoplasm</keyword>
<keyword id="KW-0315">Glutamine amidotransferase</keyword>
<keyword id="KW-0368">Histidine biosynthesis</keyword>
<keyword id="KW-0378">Hydrolase</keyword>
<keyword id="KW-0456">Lyase</keyword>
<keyword id="KW-1185">Reference proteome</keyword>
<feature type="chain" id="PRO_0000152417" description="Imidazole glycerol phosphate synthase subunit HisH">
    <location>
        <begin position="1"/>
        <end position="212"/>
    </location>
</feature>
<feature type="domain" description="Glutamine amidotransferase type-1">
    <location>
        <begin position="2"/>
        <end position="212"/>
    </location>
</feature>
<feature type="active site" description="Nucleophile" evidence="1">
    <location>
        <position position="87"/>
    </location>
</feature>
<feature type="active site" evidence="1">
    <location>
        <position position="192"/>
    </location>
</feature>
<feature type="active site" evidence="1">
    <location>
        <position position="194"/>
    </location>
</feature>
<feature type="sequence conflict" description="In Ref. 1; CAA60713." evidence="2" ref="1">
    <original>G</original>
    <variation>A</variation>
    <location>
        <position position="111"/>
    </location>
</feature>
<feature type="sequence conflict" description="In Ref. 1; CAA60713." evidence="2" ref="1">
    <original>ND</original>
    <variation>ER</variation>
    <location>
        <begin position="131"/>
        <end position="132"/>
    </location>
</feature>
<feature type="sequence conflict" description="In Ref. 1; CAA60713." evidence="2" ref="1">
    <original>GLR</original>
    <variation>AA</variation>
    <location>
        <begin position="200"/>
        <end position="202"/>
    </location>
</feature>
<proteinExistence type="inferred from homology"/>
<comment type="function">
    <text evidence="1">IGPS catalyzes the conversion of PRFAR and glutamine to IGP, AICAR and glutamate. The HisH subunit catalyzes the hydrolysis of glutamine to glutamate and ammonia as part of the synthesis of IGP and AICAR. The resulting ammonia molecule is channeled to the active site of HisF (By similarity).</text>
</comment>
<comment type="catalytic activity">
    <reaction>
        <text>5-[(5-phospho-1-deoxy-D-ribulos-1-ylimino)methylamino]-1-(5-phospho-beta-D-ribosyl)imidazole-4-carboxamide + L-glutamine = D-erythro-1-(imidazol-4-yl)glycerol 3-phosphate + 5-amino-1-(5-phospho-beta-D-ribosyl)imidazole-4-carboxamide + L-glutamate + H(+)</text>
        <dbReference type="Rhea" id="RHEA:24793"/>
        <dbReference type="ChEBI" id="CHEBI:15378"/>
        <dbReference type="ChEBI" id="CHEBI:29985"/>
        <dbReference type="ChEBI" id="CHEBI:58278"/>
        <dbReference type="ChEBI" id="CHEBI:58359"/>
        <dbReference type="ChEBI" id="CHEBI:58475"/>
        <dbReference type="ChEBI" id="CHEBI:58525"/>
        <dbReference type="EC" id="4.3.2.10"/>
    </reaction>
</comment>
<comment type="catalytic activity">
    <reaction>
        <text>L-glutamine + H2O = L-glutamate + NH4(+)</text>
        <dbReference type="Rhea" id="RHEA:15889"/>
        <dbReference type="ChEBI" id="CHEBI:15377"/>
        <dbReference type="ChEBI" id="CHEBI:28938"/>
        <dbReference type="ChEBI" id="CHEBI:29985"/>
        <dbReference type="ChEBI" id="CHEBI:58359"/>
        <dbReference type="EC" id="3.5.1.2"/>
    </reaction>
</comment>
<comment type="pathway">
    <text>Amino-acid biosynthesis; L-histidine biosynthesis; L-histidine from 5-phospho-alpha-D-ribose 1-diphosphate: step 5/9.</text>
</comment>
<comment type="subunit">
    <text evidence="1">Heterodimer of HisH and HisF.</text>
</comment>
<comment type="subcellular location">
    <subcellularLocation>
        <location evidence="1">Cytoplasm</location>
    </subcellularLocation>
</comment>
<sequence>MLTVLVDYDSGNLHSAEKAFQRMATETGAGQVLVSDRPEDVARADRIVLPGDGAFPACRRALGSYGGLSEAIEEAVTRRARPFLGICIGMQMMATRGLEHEETPGFGWIAGEVVRIAPSDPHLKVPHMGWNDLTVDHPHPVLTGIETGDHAYFVHSYHFQVAHDAERLAHADYGADITAIVGRDTMVGTQFHPEKSQKTGLRLIANFLTWKP</sequence>
<organism>
    <name type="scientific">Cereibacter sphaeroides (strain ATCC 17023 / DSM 158 / JCM 6121 / CCUG 31486 / LMG 2827 / NBRC 12203 / NCIMB 8253 / ATH 2.4.1.)</name>
    <name type="common">Rhodobacter sphaeroides</name>
    <dbReference type="NCBI Taxonomy" id="272943"/>
    <lineage>
        <taxon>Bacteria</taxon>
        <taxon>Pseudomonadati</taxon>
        <taxon>Pseudomonadota</taxon>
        <taxon>Alphaproteobacteria</taxon>
        <taxon>Rhodobacterales</taxon>
        <taxon>Paracoccaceae</taxon>
        <taxon>Cereibacter</taxon>
    </lineage>
</organism>
<reference key="1">
    <citation type="submission" date="1997-09" db="EMBL/GenBank/DDBJ databases">
        <authorList>
            <person name="Oriol E."/>
            <person name="Barbe J."/>
            <person name="Gibert I."/>
        </authorList>
    </citation>
    <scope>NUCLEOTIDE SEQUENCE [GENOMIC DNA]</scope>
</reference>
<reference key="2">
    <citation type="submission" date="2005-09" db="EMBL/GenBank/DDBJ databases">
        <title>Complete sequence of chromosome 1 of Rhodobacter sphaeroides 2.4.1.</title>
        <authorList>
            <person name="Copeland A."/>
            <person name="Lucas S."/>
            <person name="Lapidus A."/>
            <person name="Barry K."/>
            <person name="Detter J.C."/>
            <person name="Glavina T."/>
            <person name="Hammon N."/>
            <person name="Israni S."/>
            <person name="Pitluck S."/>
            <person name="Richardson P."/>
            <person name="Mackenzie C."/>
            <person name="Choudhary M."/>
            <person name="Larimer F."/>
            <person name="Hauser L.J."/>
            <person name="Land M."/>
            <person name="Donohue T.J."/>
            <person name="Kaplan S."/>
        </authorList>
    </citation>
    <scope>NUCLEOTIDE SEQUENCE [LARGE SCALE GENOMIC DNA]</scope>
    <source>
        <strain>ATCC 17023 / DSM 158 / JCM 6121 / CCUG 31486 / LMG 2827 / NBRC 12203 / NCIMB 8253 / ATH 2.4.1.</strain>
    </source>
</reference>
<evidence type="ECO:0000250" key="1"/>
<evidence type="ECO:0000305" key="2"/>
<gene>
    <name type="primary">hisH</name>
    <name type="ordered locus">RHOS4_08320</name>
    <name type="ORF">RSP_2245</name>
</gene>
<name>HIS5_CERS4</name>
<accession>O33565</accession>
<accession>Q3J484</accession>